<dbReference type="EC" id="2.7.4.8" evidence="1"/>
<dbReference type="EMBL" id="CP000153">
    <property type="protein sequence ID" value="ABB45070.1"/>
    <property type="molecule type" value="Genomic_DNA"/>
</dbReference>
<dbReference type="RefSeq" id="WP_011373410.1">
    <property type="nucleotide sequence ID" value="NC_007575.1"/>
</dbReference>
<dbReference type="SMR" id="Q30PL1"/>
<dbReference type="STRING" id="326298.Suden_1796"/>
<dbReference type="KEGG" id="tdn:Suden_1796"/>
<dbReference type="eggNOG" id="COG0194">
    <property type="taxonomic scope" value="Bacteria"/>
</dbReference>
<dbReference type="HOGENOM" id="CLU_001715_1_2_7"/>
<dbReference type="OrthoDB" id="9808150at2"/>
<dbReference type="Proteomes" id="UP000002714">
    <property type="component" value="Chromosome"/>
</dbReference>
<dbReference type="GO" id="GO:0005829">
    <property type="term" value="C:cytosol"/>
    <property type="evidence" value="ECO:0007669"/>
    <property type="project" value="TreeGrafter"/>
</dbReference>
<dbReference type="GO" id="GO:0005524">
    <property type="term" value="F:ATP binding"/>
    <property type="evidence" value="ECO:0007669"/>
    <property type="project" value="UniProtKB-UniRule"/>
</dbReference>
<dbReference type="GO" id="GO:0004385">
    <property type="term" value="F:guanylate kinase activity"/>
    <property type="evidence" value="ECO:0007669"/>
    <property type="project" value="UniProtKB-UniRule"/>
</dbReference>
<dbReference type="CDD" id="cd00071">
    <property type="entry name" value="GMPK"/>
    <property type="match status" value="1"/>
</dbReference>
<dbReference type="FunFam" id="3.30.63.10:FF:000002">
    <property type="entry name" value="Guanylate kinase 1"/>
    <property type="match status" value="1"/>
</dbReference>
<dbReference type="Gene3D" id="3.30.63.10">
    <property type="entry name" value="Guanylate Kinase phosphate binding domain"/>
    <property type="match status" value="1"/>
</dbReference>
<dbReference type="Gene3D" id="3.40.50.300">
    <property type="entry name" value="P-loop containing nucleotide triphosphate hydrolases"/>
    <property type="match status" value="1"/>
</dbReference>
<dbReference type="HAMAP" id="MF_00328">
    <property type="entry name" value="Guanylate_kinase"/>
    <property type="match status" value="1"/>
</dbReference>
<dbReference type="InterPro" id="IPR008145">
    <property type="entry name" value="GK/Ca_channel_bsu"/>
</dbReference>
<dbReference type="InterPro" id="IPR008144">
    <property type="entry name" value="Guanylate_kin-like_dom"/>
</dbReference>
<dbReference type="InterPro" id="IPR017665">
    <property type="entry name" value="Guanylate_kinase"/>
</dbReference>
<dbReference type="InterPro" id="IPR020590">
    <property type="entry name" value="Guanylate_kinase_CS"/>
</dbReference>
<dbReference type="InterPro" id="IPR027417">
    <property type="entry name" value="P-loop_NTPase"/>
</dbReference>
<dbReference type="NCBIfam" id="TIGR03263">
    <property type="entry name" value="guanyl_kin"/>
    <property type="match status" value="1"/>
</dbReference>
<dbReference type="PANTHER" id="PTHR23117:SF13">
    <property type="entry name" value="GUANYLATE KINASE"/>
    <property type="match status" value="1"/>
</dbReference>
<dbReference type="PANTHER" id="PTHR23117">
    <property type="entry name" value="GUANYLATE KINASE-RELATED"/>
    <property type="match status" value="1"/>
</dbReference>
<dbReference type="Pfam" id="PF00625">
    <property type="entry name" value="Guanylate_kin"/>
    <property type="match status" value="1"/>
</dbReference>
<dbReference type="SMART" id="SM00072">
    <property type="entry name" value="GuKc"/>
    <property type="match status" value="1"/>
</dbReference>
<dbReference type="SUPFAM" id="SSF52540">
    <property type="entry name" value="P-loop containing nucleoside triphosphate hydrolases"/>
    <property type="match status" value="1"/>
</dbReference>
<dbReference type="PROSITE" id="PS00856">
    <property type="entry name" value="GUANYLATE_KINASE_1"/>
    <property type="match status" value="1"/>
</dbReference>
<dbReference type="PROSITE" id="PS50052">
    <property type="entry name" value="GUANYLATE_KINASE_2"/>
    <property type="match status" value="1"/>
</dbReference>
<feature type="chain" id="PRO_0000266431" description="Guanylate kinase">
    <location>
        <begin position="1"/>
        <end position="206"/>
    </location>
</feature>
<feature type="domain" description="Guanylate kinase-like" evidence="1">
    <location>
        <begin position="6"/>
        <end position="185"/>
    </location>
</feature>
<feature type="binding site" evidence="1">
    <location>
        <begin position="13"/>
        <end position="20"/>
    </location>
    <ligand>
        <name>ATP</name>
        <dbReference type="ChEBI" id="CHEBI:30616"/>
    </ligand>
</feature>
<protein>
    <recommendedName>
        <fullName evidence="1">Guanylate kinase</fullName>
        <ecNumber evidence="1">2.7.4.8</ecNumber>
    </recommendedName>
    <alternativeName>
        <fullName evidence="1">GMP kinase</fullName>
    </alternativeName>
</protein>
<sequence>MNHKTGAILVLSGPSGAGKSSLIKEVIDDIGECYFSISTTTRPIREGEVDGVHYHFVSESEFKKDIEDEFFLEYAVVHSNYYGTSIKPVKKALKSGKLVIFDIDVQGNATIINRLGDITTSVFISPPTLSELKKRLEARSTDTKDVIERRIEMAKREMQRVSEYDFLIVNDNLQEAAKTLRIIADAARVKIPSNEINDFVRSWEDI</sequence>
<comment type="function">
    <text evidence="1">Essential for recycling GMP and indirectly, cGMP.</text>
</comment>
<comment type="catalytic activity">
    <reaction evidence="1">
        <text>GMP + ATP = GDP + ADP</text>
        <dbReference type="Rhea" id="RHEA:20780"/>
        <dbReference type="ChEBI" id="CHEBI:30616"/>
        <dbReference type="ChEBI" id="CHEBI:58115"/>
        <dbReference type="ChEBI" id="CHEBI:58189"/>
        <dbReference type="ChEBI" id="CHEBI:456216"/>
        <dbReference type="EC" id="2.7.4.8"/>
    </reaction>
</comment>
<comment type="subcellular location">
    <subcellularLocation>
        <location evidence="1">Cytoplasm</location>
    </subcellularLocation>
</comment>
<comment type="similarity">
    <text evidence="1">Belongs to the guanylate kinase family.</text>
</comment>
<name>KGUA_SULDN</name>
<organism>
    <name type="scientific">Sulfurimonas denitrificans (strain ATCC 33889 / DSM 1251)</name>
    <name type="common">Thiomicrospira denitrificans (strain ATCC 33889 / DSM 1251)</name>
    <dbReference type="NCBI Taxonomy" id="326298"/>
    <lineage>
        <taxon>Bacteria</taxon>
        <taxon>Pseudomonadati</taxon>
        <taxon>Campylobacterota</taxon>
        <taxon>Epsilonproteobacteria</taxon>
        <taxon>Campylobacterales</taxon>
        <taxon>Sulfurimonadaceae</taxon>
        <taxon>Sulfurimonas</taxon>
    </lineage>
</organism>
<keyword id="KW-0067">ATP-binding</keyword>
<keyword id="KW-0963">Cytoplasm</keyword>
<keyword id="KW-0418">Kinase</keyword>
<keyword id="KW-0547">Nucleotide-binding</keyword>
<keyword id="KW-1185">Reference proteome</keyword>
<keyword id="KW-0808">Transferase</keyword>
<gene>
    <name evidence="1" type="primary">gmk</name>
    <name type="ordered locus">Suden_1796</name>
</gene>
<reference key="1">
    <citation type="journal article" date="2008" name="Appl. Environ. Microbiol.">
        <title>Genome of the epsilonproteobacterial chemolithoautotroph Sulfurimonas denitrificans.</title>
        <authorList>
            <person name="Sievert S.M."/>
            <person name="Scott K.M."/>
            <person name="Klotz M.G."/>
            <person name="Chain P.S.G."/>
            <person name="Hauser L.J."/>
            <person name="Hemp J."/>
            <person name="Huegler M."/>
            <person name="Land M."/>
            <person name="Lapidus A."/>
            <person name="Larimer F.W."/>
            <person name="Lucas S."/>
            <person name="Malfatti S.A."/>
            <person name="Meyer F."/>
            <person name="Paulsen I.T."/>
            <person name="Ren Q."/>
            <person name="Simon J."/>
            <person name="Bailey K."/>
            <person name="Diaz E."/>
            <person name="Fitzpatrick K.A."/>
            <person name="Glover B."/>
            <person name="Gwatney N."/>
            <person name="Korajkic A."/>
            <person name="Long A."/>
            <person name="Mobberley J.M."/>
            <person name="Pantry S.N."/>
            <person name="Pazder G."/>
            <person name="Peterson S."/>
            <person name="Quintanilla J.D."/>
            <person name="Sprinkle R."/>
            <person name="Stephens J."/>
            <person name="Thomas P."/>
            <person name="Vaughn R."/>
            <person name="Weber M.J."/>
            <person name="Wooten L.L."/>
        </authorList>
    </citation>
    <scope>NUCLEOTIDE SEQUENCE [LARGE SCALE GENOMIC DNA]</scope>
    <source>
        <strain>ATCC 33889 / DSM 1251</strain>
    </source>
</reference>
<accession>Q30PL1</accession>
<proteinExistence type="inferred from homology"/>
<evidence type="ECO:0000255" key="1">
    <source>
        <dbReference type="HAMAP-Rule" id="MF_00328"/>
    </source>
</evidence>